<protein>
    <recommendedName>
        <fullName>Protein E4</fullName>
    </recommendedName>
</protein>
<keyword id="KW-0244">Early protein</keyword>
<keyword id="KW-1035">Host cytoplasm</keyword>
<keyword id="KW-1079">Host G2/M cell cycle arrest by virus</keyword>
<keyword id="KW-1048">Host nucleus</keyword>
<keyword id="KW-0945">Host-virus interaction</keyword>
<keyword id="KW-1121">Modulation of host cell cycle by virus</keyword>
<keyword id="KW-0597">Phosphoprotein</keyword>
<keyword id="KW-1185">Reference proteome</keyword>
<dbReference type="EMBL" id="M62849">
    <property type="protein sequence ID" value="AAA47049.1"/>
    <property type="status" value="ALT_SEQ"/>
    <property type="molecule type" value="Genomic_DNA"/>
</dbReference>
<dbReference type="PIR" id="E38502">
    <property type="entry name" value="W4WL39"/>
</dbReference>
<dbReference type="Proteomes" id="UP000009120">
    <property type="component" value="Genome"/>
</dbReference>
<dbReference type="GO" id="GO:0030430">
    <property type="term" value="C:host cell cytoplasm"/>
    <property type="evidence" value="ECO:0007669"/>
    <property type="project" value="UniProtKB-SubCell"/>
</dbReference>
<dbReference type="GO" id="GO:0042025">
    <property type="term" value="C:host cell nucleus"/>
    <property type="evidence" value="ECO:0007669"/>
    <property type="project" value="UniProtKB-SubCell"/>
</dbReference>
<dbReference type="GO" id="GO:0039592">
    <property type="term" value="P:symbiont-mediated arrest of host cell cycle during G2/M transition"/>
    <property type="evidence" value="ECO:0007669"/>
    <property type="project" value="UniProtKB-KW"/>
</dbReference>
<dbReference type="InterPro" id="IPR003861">
    <property type="entry name" value="Papilloma_E4"/>
</dbReference>
<dbReference type="Pfam" id="PF02711">
    <property type="entry name" value="Pap_E4"/>
    <property type="match status" value="1"/>
</dbReference>
<name>VE4_HPV39</name>
<accession>P24831</accession>
<evidence type="ECO:0000250" key="1">
    <source>
        <dbReference type="UniProtKB" id="P06922"/>
    </source>
</evidence>
<evidence type="ECO:0000256" key="2">
    <source>
        <dbReference type="SAM" id="MobiDB-lite"/>
    </source>
</evidence>
<evidence type="ECO:0000305" key="3"/>
<proteinExistence type="inferred from homology"/>
<feature type="chain" id="PRO_0000133272" description="Protein E4">
    <location>
        <begin position="1"/>
        <end position="91"/>
    </location>
</feature>
<feature type="region of interest" description="Disordered" evidence="2">
    <location>
        <begin position="1"/>
        <end position="62"/>
    </location>
</feature>
<feature type="compositionally biased region" description="Pro residues" evidence="2">
    <location>
        <begin position="22"/>
        <end position="33"/>
    </location>
</feature>
<feature type="compositionally biased region" description="Polar residues" evidence="2">
    <location>
        <begin position="49"/>
        <end position="58"/>
    </location>
</feature>
<organismHost>
    <name type="scientific">Homo sapiens</name>
    <name type="common">Human</name>
    <dbReference type="NCBI Taxonomy" id="9606"/>
</organismHost>
<organism>
    <name type="scientific">Human papillomavirus 39</name>
    <dbReference type="NCBI Taxonomy" id="10588"/>
    <lineage>
        <taxon>Viruses</taxon>
        <taxon>Monodnaviria</taxon>
        <taxon>Shotokuvirae</taxon>
        <taxon>Cossaviricota</taxon>
        <taxon>Papovaviricetes</taxon>
        <taxon>Zurhausenvirales</taxon>
        <taxon>Papillomaviridae</taxon>
        <taxon>Firstpapillomavirinae</taxon>
        <taxon>Alphapapillomavirus</taxon>
        <taxon>Alphapapillomavirus 7</taxon>
    </lineage>
</organism>
<sequence length="91" mass="10198">MANREVPVTDRYPLLNLLPNYQTPPRPIPPQQPHAPKKQSRRRLESDLDSVQSQSPLSPTECPWTILTTHSTVTVQATTQDGTSVVVTLRL</sequence>
<comment type="function">
    <text evidence="1">Contributes to multiple aspects of the viral life cycle including viral genome amplification, suppression of suprabasal cell differentiation and egress of newly formed virions. Induces host cell cycle arrest at the G2 phase by associating with and preventing the nuclear entry of host CDK1/cyclin B1 complexes. Inhibits cellular DNA replication by preventing loading of host replication licensing proteins MCM2 and MCM7 onto chromatin. Within the cytoplasm, associates with host kinase SRPK1, a splicing factor regulator, and inhibits its activity. Therefore, E4 favors expression of late viral transcripts by inhibiting SRPK1-mediated phosphorylation of host serine-arginine (SR) proteins that have critical roles in mRNA metabolism. Late in the infectious cycle, E4 also acts to diminish the integrity of the keratinocyte by disrupting the keratin cytoskeleton and inducing apoptosis through alteration of mitochondrial function to facilitate egress of the newly formed virions.</text>
</comment>
<comment type="subunit">
    <text evidence="1">Assembles into oligomeric complexes. Interacts with host CDK1. Interacts with host SRPK1; this interaction may favor expression of late viral transcripts. Interacts with host cytokeratin components KRT8 and KRT18.</text>
</comment>
<comment type="subcellular location">
    <subcellularLocation>
        <location evidence="1">Host cytoplasm</location>
    </subcellularLocation>
    <subcellularLocation>
        <location evidence="1">Host nucleus</location>
    </subcellularLocation>
</comment>
<comment type="PTM">
    <text evidence="1">Phosphorylated by host ERK. The phosphorylation triggers a structural change that enhances keratin binding and protein stability.</text>
</comment>
<comment type="miscellaneous">
    <text evidence="1">The major E4 form is first synthesized as an E1^E4 fusion protein from spliced E1^E4 transcripts, such that the first few amino acids of the E4 protein are derived from the N terminus of E1.</text>
</comment>
<comment type="similarity">
    <text evidence="3">Belongs to the papillomaviridae E4 protein family.</text>
</comment>
<reference key="1">
    <citation type="journal article" date="1991" name="Virology">
        <title>Genome organization and nucleotide sequence of human papillomavirus type 39.</title>
        <authorList>
            <person name="Volpers C."/>
            <person name="Streeck R.E."/>
        </authorList>
    </citation>
    <scope>NUCLEOTIDE SEQUENCE [GENOMIC DNA]</scope>
</reference>
<gene>
    <name type="primary">E4</name>
</gene>